<protein>
    <recommendedName>
        <fullName evidence="1">Cell division protein ZipA</fullName>
    </recommendedName>
</protein>
<comment type="function">
    <text evidence="1">Essential cell division protein that stabilizes the FtsZ protofilaments by cross-linking them and that serves as a cytoplasmic membrane anchor for the Z ring. Also required for the recruitment to the septal ring of downstream cell division proteins.</text>
</comment>
<comment type="subunit">
    <text evidence="1">Interacts with FtsZ via their C-terminal domains.</text>
</comment>
<comment type="subcellular location">
    <subcellularLocation>
        <location evidence="1">Cell inner membrane</location>
        <topology evidence="1">Single-pass type I membrane protein</topology>
    </subcellularLocation>
    <text evidence="1">Localizes to the Z ring in an FtsZ-dependent manner.</text>
</comment>
<comment type="similarity">
    <text evidence="1">Belongs to the ZipA family.</text>
</comment>
<proteinExistence type="inferred from homology"/>
<gene>
    <name evidence="1" type="primary">zipA</name>
    <name type="ordered locus">Z3678</name>
    <name type="ordered locus">ECs3284</name>
</gene>
<sequence length="328" mass="36522">MMQDLRLILIIVGAIAIIALLVHGFWTSRKERSSMFRDRPLKRMKSKRDDDSYDEDVEDDEGVGEVRVHRVNHAPANAQEHEAARPSPQHQYQPPYASAQPRQPVQQPPEAQVPPQHVPRPAQPVQQPAYQPQPEQPLQQPVSPQVAPAPQPVHSAPQPAQQAFQPAEPVAAPQPEPVAEPAPVMDKPKRKEAVIIMNVAAHHGSELNGELLLNSIQQAGFIFGDMNIYHRHLSPDGSGPALFSLANMVKPGTFDPEMKDFTTPGVTIFMQVPSYGDELQNFKLMLQSAQHIADEVGGVVLDDQRRMMTPQKLREYQDIIREVKDANA</sequence>
<dbReference type="EMBL" id="AE005174">
    <property type="protein sequence ID" value="AAG57531.1"/>
    <property type="molecule type" value="Genomic_DNA"/>
</dbReference>
<dbReference type="EMBL" id="BA000007">
    <property type="protein sequence ID" value="BAB36707.1"/>
    <property type="molecule type" value="Genomic_DNA"/>
</dbReference>
<dbReference type="PIR" id="D91039">
    <property type="entry name" value="D91039"/>
</dbReference>
<dbReference type="PIR" id="G85883">
    <property type="entry name" value="G85883"/>
</dbReference>
<dbReference type="RefSeq" id="NP_311311.1">
    <property type="nucleotide sequence ID" value="NC_002695.1"/>
</dbReference>
<dbReference type="SMR" id="Q8X492"/>
<dbReference type="STRING" id="155864.Z3678"/>
<dbReference type="GeneID" id="915552"/>
<dbReference type="KEGG" id="ece:Z3678"/>
<dbReference type="KEGG" id="ecs:ECs_3284"/>
<dbReference type="PATRIC" id="fig|386585.9.peg.3431"/>
<dbReference type="eggNOG" id="COG3115">
    <property type="taxonomic scope" value="Bacteria"/>
</dbReference>
<dbReference type="HOGENOM" id="CLU_030174_1_0_6"/>
<dbReference type="Proteomes" id="UP000000558">
    <property type="component" value="Chromosome"/>
</dbReference>
<dbReference type="Proteomes" id="UP000002519">
    <property type="component" value="Chromosome"/>
</dbReference>
<dbReference type="GO" id="GO:0032153">
    <property type="term" value="C:cell division site"/>
    <property type="evidence" value="ECO:0007669"/>
    <property type="project" value="UniProtKB-UniRule"/>
</dbReference>
<dbReference type="GO" id="GO:0005886">
    <property type="term" value="C:plasma membrane"/>
    <property type="evidence" value="ECO:0007669"/>
    <property type="project" value="UniProtKB-SubCell"/>
</dbReference>
<dbReference type="GO" id="GO:0000917">
    <property type="term" value="P:division septum assembly"/>
    <property type="evidence" value="ECO:0007669"/>
    <property type="project" value="TreeGrafter"/>
</dbReference>
<dbReference type="GO" id="GO:0043093">
    <property type="term" value="P:FtsZ-dependent cytokinesis"/>
    <property type="evidence" value="ECO:0007669"/>
    <property type="project" value="UniProtKB-UniRule"/>
</dbReference>
<dbReference type="CDD" id="cd00231">
    <property type="entry name" value="ZipA"/>
    <property type="match status" value="1"/>
</dbReference>
<dbReference type="FunFam" id="3.30.1400.10:FF:000001">
    <property type="entry name" value="Cell division protein ZipA"/>
    <property type="match status" value="1"/>
</dbReference>
<dbReference type="Gene3D" id="3.30.1400.10">
    <property type="entry name" value="ZipA, C-terminal FtsZ-binding domain"/>
    <property type="match status" value="1"/>
</dbReference>
<dbReference type="HAMAP" id="MF_00509">
    <property type="entry name" value="ZipA"/>
    <property type="match status" value="1"/>
</dbReference>
<dbReference type="InterPro" id="IPR011919">
    <property type="entry name" value="Cell_div_ZipA"/>
</dbReference>
<dbReference type="InterPro" id="IPR007449">
    <property type="entry name" value="ZipA_FtsZ-bd_C"/>
</dbReference>
<dbReference type="InterPro" id="IPR036765">
    <property type="entry name" value="ZipA_FtsZ-bd_C_sf"/>
</dbReference>
<dbReference type="NCBIfam" id="TIGR02205">
    <property type="entry name" value="septum_zipA"/>
    <property type="match status" value="1"/>
</dbReference>
<dbReference type="PANTHER" id="PTHR38685">
    <property type="entry name" value="CELL DIVISION PROTEIN ZIPA"/>
    <property type="match status" value="1"/>
</dbReference>
<dbReference type="PANTHER" id="PTHR38685:SF1">
    <property type="entry name" value="CELL DIVISION PROTEIN ZIPA"/>
    <property type="match status" value="1"/>
</dbReference>
<dbReference type="Pfam" id="PF04354">
    <property type="entry name" value="ZipA_C"/>
    <property type="match status" value="1"/>
</dbReference>
<dbReference type="SMART" id="SM00771">
    <property type="entry name" value="ZipA_C"/>
    <property type="match status" value="1"/>
</dbReference>
<dbReference type="SUPFAM" id="SSF64383">
    <property type="entry name" value="Cell-division protein ZipA, C-terminal domain"/>
    <property type="match status" value="1"/>
</dbReference>
<organism>
    <name type="scientific">Escherichia coli O157:H7</name>
    <dbReference type="NCBI Taxonomy" id="83334"/>
    <lineage>
        <taxon>Bacteria</taxon>
        <taxon>Pseudomonadati</taxon>
        <taxon>Pseudomonadota</taxon>
        <taxon>Gammaproteobacteria</taxon>
        <taxon>Enterobacterales</taxon>
        <taxon>Enterobacteriaceae</taxon>
        <taxon>Escherichia</taxon>
    </lineage>
</organism>
<accession>Q8X492</accession>
<accession>Q8X2J6</accession>
<reference key="1">
    <citation type="journal article" date="2001" name="Nature">
        <title>Genome sequence of enterohaemorrhagic Escherichia coli O157:H7.</title>
        <authorList>
            <person name="Perna N.T."/>
            <person name="Plunkett G. III"/>
            <person name="Burland V."/>
            <person name="Mau B."/>
            <person name="Glasner J.D."/>
            <person name="Rose D.J."/>
            <person name="Mayhew G.F."/>
            <person name="Evans P.S."/>
            <person name="Gregor J."/>
            <person name="Kirkpatrick H.A."/>
            <person name="Posfai G."/>
            <person name="Hackett J."/>
            <person name="Klink S."/>
            <person name="Boutin A."/>
            <person name="Shao Y."/>
            <person name="Miller L."/>
            <person name="Grotbeck E.J."/>
            <person name="Davis N.W."/>
            <person name="Lim A."/>
            <person name="Dimalanta E.T."/>
            <person name="Potamousis K."/>
            <person name="Apodaca J."/>
            <person name="Anantharaman T.S."/>
            <person name="Lin J."/>
            <person name="Yen G."/>
            <person name="Schwartz D.C."/>
            <person name="Welch R.A."/>
            <person name="Blattner F.R."/>
        </authorList>
    </citation>
    <scope>NUCLEOTIDE SEQUENCE [LARGE SCALE GENOMIC DNA]</scope>
    <source>
        <strain>O157:H7 / EDL933 / ATCC 700927 / EHEC</strain>
    </source>
</reference>
<reference key="2">
    <citation type="journal article" date="2001" name="DNA Res.">
        <title>Complete genome sequence of enterohemorrhagic Escherichia coli O157:H7 and genomic comparison with a laboratory strain K-12.</title>
        <authorList>
            <person name="Hayashi T."/>
            <person name="Makino K."/>
            <person name="Ohnishi M."/>
            <person name="Kurokawa K."/>
            <person name="Ishii K."/>
            <person name="Yokoyama K."/>
            <person name="Han C.-G."/>
            <person name="Ohtsubo E."/>
            <person name="Nakayama K."/>
            <person name="Murata T."/>
            <person name="Tanaka M."/>
            <person name="Tobe T."/>
            <person name="Iida T."/>
            <person name="Takami H."/>
            <person name="Honda T."/>
            <person name="Sasakawa C."/>
            <person name="Ogasawara N."/>
            <person name="Yasunaga T."/>
            <person name="Kuhara S."/>
            <person name="Shiba T."/>
            <person name="Hattori M."/>
            <person name="Shinagawa H."/>
        </authorList>
    </citation>
    <scope>NUCLEOTIDE SEQUENCE [LARGE SCALE GENOMIC DNA]</scope>
    <source>
        <strain>O157:H7 / Sakai / RIMD 0509952 / EHEC</strain>
    </source>
</reference>
<evidence type="ECO:0000255" key="1">
    <source>
        <dbReference type="HAMAP-Rule" id="MF_00509"/>
    </source>
</evidence>
<evidence type="ECO:0000256" key="2">
    <source>
        <dbReference type="SAM" id="MobiDB-lite"/>
    </source>
</evidence>
<evidence type="ECO:0000305" key="3"/>
<name>ZIPA_ECO57</name>
<feature type="chain" id="PRO_0000214523" description="Cell division protein ZipA">
    <location>
        <begin position="1"/>
        <end position="328"/>
    </location>
</feature>
<feature type="topological domain" description="Periplasmic" evidence="1">
    <location>
        <begin position="1"/>
        <end position="6"/>
    </location>
</feature>
<feature type="transmembrane region" description="Helical" evidence="1">
    <location>
        <begin position="7"/>
        <end position="27"/>
    </location>
</feature>
<feature type="topological domain" description="Cytoplasmic" evidence="1">
    <location>
        <begin position="28"/>
        <end position="328"/>
    </location>
</feature>
<feature type="region of interest" description="Disordered" evidence="2">
    <location>
        <begin position="42"/>
        <end position="186"/>
    </location>
</feature>
<feature type="compositionally biased region" description="Acidic residues" evidence="2">
    <location>
        <begin position="51"/>
        <end position="63"/>
    </location>
</feature>
<feature type="compositionally biased region" description="Low complexity" evidence="2">
    <location>
        <begin position="100"/>
        <end position="115"/>
    </location>
</feature>
<feature type="compositionally biased region" description="Low complexity" evidence="2">
    <location>
        <begin position="123"/>
        <end position="171"/>
    </location>
</feature>
<feature type="sequence conflict" description="In Ref. 2; BAB36707." evidence="3" ref="2">
    <original>V</original>
    <variation>A</variation>
    <location>
        <position position="118"/>
    </location>
</feature>
<feature type="sequence conflict" description="In Ref. 2." evidence="3" ref="2">
    <original>P</original>
    <variation>PVQQP</variation>
    <location>
        <position position="128"/>
    </location>
</feature>
<keyword id="KW-0131">Cell cycle</keyword>
<keyword id="KW-0132">Cell division</keyword>
<keyword id="KW-0997">Cell inner membrane</keyword>
<keyword id="KW-1003">Cell membrane</keyword>
<keyword id="KW-0472">Membrane</keyword>
<keyword id="KW-1185">Reference proteome</keyword>
<keyword id="KW-0812">Transmembrane</keyword>
<keyword id="KW-1133">Transmembrane helix</keyword>